<evidence type="ECO:0000250" key="1">
    <source>
        <dbReference type="UniProtKB" id="I6L8L6"/>
    </source>
</evidence>
<evidence type="ECO:0000250" key="2">
    <source>
        <dbReference type="UniProtKB" id="Q90249"/>
    </source>
</evidence>
<evidence type="ECO:0000269" key="3">
    <source>
    </source>
</evidence>
<evidence type="ECO:0000303" key="4">
    <source>
    </source>
</evidence>
<evidence type="ECO:0000305" key="5"/>
<evidence type="ECO:0000305" key="6">
    <source>
    </source>
</evidence>
<comment type="function">
    <text evidence="1 3">Snake venom phospholipase A2 homolog that lacks enzymatic activity (PubMed:24724078). Shows high myotoxic activity, neutrophile activation (demonstrated by activation induction of IL-1beta production), slight cytotoxicity against Jurkat (leukemia T) and SK-BR-3 (breast adenocarcinoma) tumor cell lines, and slight antiparasitic activity against promastigote forms of Leishmania amazonensis (PubMed:24724078). A model of myotoxic mechanism has been proposed: an apo Lys49-PLA2 is activated by the entrance of a hydrophobic molecule (e.g. fatty acid) at the hydrophobic channel of the protein leading to a reorientation of a monomer (By similarity). This reorientation causes a transition between 'inactive' to 'active' states, causing alignment of C-terminal and membrane-docking sites (MDoS) side-by-side and putting the membrane-disruption sites (MDiS) in the same plane, exposed to solvent and in a symmetric position for both monomers (By similarity). The MDoS region stabilizes the toxin on membrane by the interaction of charged residues with phospholipid head groups (By similarity). Subsequently, the MDiS region destabilizes the membrane with penetration of hydrophobic residues (By similarity). This insertion causes a disorganization of the membrane, allowing an uncontrolled influx of ions (i.e. calcium and sodium), and eventually triggering irreversible intracellular alterations and cell death (By similarity).</text>
</comment>
<comment type="subunit">
    <text evidence="3">Monomer.</text>
</comment>
<comment type="subcellular location">
    <subcellularLocation>
        <location evidence="3">Secreted</location>
    </subcellularLocation>
</comment>
<comment type="tissue specificity">
    <text evidence="6">Expressed by the venom gland.</text>
</comment>
<comment type="mass spectrometry"/>
<comment type="similarity">
    <text evidence="5">Belongs to the phospholipase A2 family. Group II subfamily. K49 sub-subfamily.</text>
</comment>
<comment type="caution">
    <text evidence="5">Does not bind calcium as one of the calcium-binding sites is lost (Asp-&gt;Lys in position 48, which corresponds to 'Lys-49' in the current nomenclature).</text>
</comment>
<proteinExistence type="evidence at protein level"/>
<protein>
    <recommendedName>
        <fullName evidence="4">Basic phospholipase A2 homolog BmatTX-I</fullName>
        <shortName>svPLA2 homolog</shortName>
    </recommendedName>
    <alternativeName>
        <fullName>Lys49 PLA2-like</fullName>
    </alternativeName>
</protein>
<organism>
    <name type="scientific">Bothrops mattogrossensis</name>
    <name type="common">Pitviper</name>
    <name type="synonym">Bothrops neuwiedi mattogrossensis</name>
    <dbReference type="NCBI Taxonomy" id="1171125"/>
    <lineage>
        <taxon>Eukaryota</taxon>
        <taxon>Metazoa</taxon>
        <taxon>Chordata</taxon>
        <taxon>Craniata</taxon>
        <taxon>Vertebrata</taxon>
        <taxon>Euteleostomi</taxon>
        <taxon>Lepidosauria</taxon>
        <taxon>Squamata</taxon>
        <taxon>Bifurcata</taxon>
        <taxon>Unidentata</taxon>
        <taxon>Episquamata</taxon>
        <taxon>Toxicofera</taxon>
        <taxon>Serpentes</taxon>
        <taxon>Colubroidea</taxon>
        <taxon>Viperidae</taxon>
        <taxon>Crotalinae</taxon>
        <taxon>Bothrops</taxon>
    </lineage>
</organism>
<reference key="1">
    <citation type="journal article" date="2014" name="Biomed. Res. Int.">
        <title>Purification and biochemical characterization of three myotoxins from Bothrops mattogrossensis snake venom with toxicity against Leishmania and tumor cells.</title>
        <authorList>
            <person name="de Moura A.A."/>
            <person name="Kayano A.M."/>
            <person name="Oliveira G.A."/>
            <person name="Setubal S.S."/>
            <person name="Ribeiro J.G."/>
            <person name="Barros N.B."/>
            <person name="Nicolete R."/>
            <person name="Moura L.A."/>
            <person name="Fuly A.L."/>
            <person name="Nomizo A."/>
            <person name="da Silva S.L."/>
            <person name="Fernandes C.F."/>
            <person name="Zuliani J.P."/>
            <person name="Stabeli R.G."/>
            <person name="Soares A.M."/>
            <person name="Calderon L.A."/>
        </authorList>
    </citation>
    <scope>PROTEIN SEQUENCE</scope>
    <scope>FUNCTION</scope>
    <scope>SUBUNIT</scope>
    <scope>MASS SPECTROMETRY</scope>
    <scope>SUBCELLULAR LOCATION</scope>
    <source>
        <tissue>Venom</tissue>
    </source>
</reference>
<dbReference type="SMR" id="P0DMJ9"/>
<dbReference type="GO" id="GO:0005576">
    <property type="term" value="C:extracellular region"/>
    <property type="evidence" value="ECO:0007669"/>
    <property type="project" value="UniProtKB-SubCell"/>
</dbReference>
<dbReference type="GO" id="GO:0005509">
    <property type="term" value="F:calcium ion binding"/>
    <property type="evidence" value="ECO:0007669"/>
    <property type="project" value="InterPro"/>
</dbReference>
<dbReference type="GO" id="GO:0047498">
    <property type="term" value="F:calcium-dependent phospholipase A2 activity"/>
    <property type="evidence" value="ECO:0007669"/>
    <property type="project" value="TreeGrafter"/>
</dbReference>
<dbReference type="GO" id="GO:0005543">
    <property type="term" value="F:phospholipid binding"/>
    <property type="evidence" value="ECO:0007669"/>
    <property type="project" value="TreeGrafter"/>
</dbReference>
<dbReference type="GO" id="GO:0090729">
    <property type="term" value="F:toxin activity"/>
    <property type="evidence" value="ECO:0007669"/>
    <property type="project" value="UniProtKB-KW"/>
</dbReference>
<dbReference type="GO" id="GO:0050482">
    <property type="term" value="P:arachidonate secretion"/>
    <property type="evidence" value="ECO:0007669"/>
    <property type="project" value="InterPro"/>
</dbReference>
<dbReference type="GO" id="GO:0016042">
    <property type="term" value="P:lipid catabolic process"/>
    <property type="evidence" value="ECO:0007669"/>
    <property type="project" value="InterPro"/>
</dbReference>
<dbReference type="GO" id="GO:0042130">
    <property type="term" value="P:negative regulation of T cell proliferation"/>
    <property type="evidence" value="ECO:0007669"/>
    <property type="project" value="TreeGrafter"/>
</dbReference>
<dbReference type="GO" id="GO:0006644">
    <property type="term" value="P:phospholipid metabolic process"/>
    <property type="evidence" value="ECO:0007669"/>
    <property type="project" value="InterPro"/>
</dbReference>
<dbReference type="Gene3D" id="1.20.90.10">
    <property type="entry name" value="Phospholipase A2 domain"/>
    <property type="match status" value="1"/>
</dbReference>
<dbReference type="InterPro" id="IPR001211">
    <property type="entry name" value="PLipase_A2"/>
</dbReference>
<dbReference type="InterPro" id="IPR016090">
    <property type="entry name" value="PLipase_A2_dom"/>
</dbReference>
<dbReference type="InterPro" id="IPR036444">
    <property type="entry name" value="PLipase_A2_dom_sf"/>
</dbReference>
<dbReference type="InterPro" id="IPR033113">
    <property type="entry name" value="PLipase_A2_His_AS"/>
</dbReference>
<dbReference type="PANTHER" id="PTHR11716">
    <property type="entry name" value="PHOSPHOLIPASE A2 FAMILY MEMBER"/>
    <property type="match status" value="1"/>
</dbReference>
<dbReference type="PANTHER" id="PTHR11716:SF9">
    <property type="entry name" value="PHOSPHOLIPASE A2, MEMBRANE ASSOCIATED"/>
    <property type="match status" value="1"/>
</dbReference>
<dbReference type="Pfam" id="PF00068">
    <property type="entry name" value="Phospholip_A2_1"/>
    <property type="match status" value="1"/>
</dbReference>
<dbReference type="PRINTS" id="PR00389">
    <property type="entry name" value="PHPHLIPASEA2"/>
</dbReference>
<dbReference type="SMART" id="SM00085">
    <property type="entry name" value="PA2c"/>
    <property type="match status" value="1"/>
</dbReference>
<dbReference type="SUPFAM" id="SSF48619">
    <property type="entry name" value="Phospholipase A2, PLA2"/>
    <property type="match status" value="1"/>
</dbReference>
<dbReference type="PROSITE" id="PS00118">
    <property type="entry name" value="PA2_HIS"/>
    <property type="match status" value="1"/>
</dbReference>
<accession>P0DMJ9</accession>
<sequence>SLVELGKMILQETGKNPVTSYGAYGCNCGVLGHGKPKDATDRCCYVHKCCY</sequence>
<name>PA2H1_BOTMT</name>
<feature type="chain" id="PRO_0000429740" description="Basic phospholipase A2 homolog BmatTX-I">
    <location>
        <begin position="1"/>
        <end position="51" status="greater than"/>
    </location>
</feature>
<feature type="disulfide bond" evidence="2">
    <location>
        <begin position="26"/>
        <end status="unknown"/>
    </location>
</feature>
<feature type="disulfide bond" evidence="2">
    <location>
        <begin position="28"/>
        <end position="44"/>
    </location>
</feature>
<feature type="disulfide bond" evidence="2">
    <location>
        <begin position="43"/>
        <end status="unknown"/>
    </location>
</feature>
<feature type="disulfide bond" evidence="2">
    <location>
        <begin position="49"/>
        <end status="unknown"/>
    </location>
</feature>
<feature type="disulfide bond" evidence="2">
    <location>
        <begin position="50"/>
        <end status="unknown"/>
    </location>
</feature>
<feature type="non-terminal residue">
    <location>
        <position position="51"/>
    </location>
</feature>
<keyword id="KW-0903">Direct protein sequencing</keyword>
<keyword id="KW-1015">Disulfide bond</keyword>
<keyword id="KW-0959">Myotoxin</keyword>
<keyword id="KW-0964">Secreted</keyword>
<keyword id="KW-0800">Toxin</keyword>